<comment type="function">
    <text>Required for extrapulmonary dissemination. Mediates adherence to epithelial cells by binding to sulfated glycoconjugates present at the surface of these cells; binds heparin, dextran sulfate, fucoidan and chondroitin sulfate. Promotes hemagglutination of erythrocytes of certain host species. Induces mycobacterial aggregation.</text>
</comment>
<comment type="interaction">
    <interactant intactId="EBI-7679697">
        <id>A5TZK3</id>
    </interactant>
    <interactant intactId="EBI-7679697">
        <id>A5TZK3</id>
        <label>hbhA</label>
    </interactant>
    <organismsDiffer>false</organismsDiffer>
    <experiments>10</experiments>
</comment>
<comment type="subcellular location">
    <subcellularLocation>
        <location evidence="3">Cell surface</location>
    </subcellularLocation>
</comment>
<comment type="domain">
    <text evidence="1">Heparin binding seems to require the C-terminal domain of HbhA. Progressive truncations from the C-terminal end diminish the affinity for heparin (By similarity).</text>
</comment>
<comment type="PTM">
    <text evidence="1">Glycosylated. Glycosylation may protect the protein from proteolytic degradation and be important for hemagglutination. It suggests that the carbohydrate moiety may be located within the C-terminal domain of HbhA (By similarity).</text>
</comment>
<comment type="similarity">
    <text evidence="4">To M.leprae HbhA.</text>
</comment>
<keyword id="KW-0130">Cell adhesion</keyword>
<keyword id="KW-0903">Direct protein sequencing</keyword>
<keyword id="KW-0325">Glycoprotein</keyword>
<keyword id="KW-0348">Hemagglutinin</keyword>
<keyword id="KW-0358">Heparin-binding</keyword>
<keyword id="KW-1185">Reference proteome</keyword>
<keyword id="KW-0843">Virulence</keyword>
<dbReference type="EMBL" id="CP000611">
    <property type="protein sequence ID" value="ABQ72203.1"/>
    <property type="molecule type" value="Genomic_DNA"/>
</dbReference>
<dbReference type="RefSeq" id="WP_003402339.1">
    <property type="nucleotide sequence ID" value="NZ_CP016972.1"/>
</dbReference>
<dbReference type="SMR" id="A5TZK3"/>
<dbReference type="MINT" id="A5TZK3"/>
<dbReference type="GeneID" id="45424436"/>
<dbReference type="KEGG" id="mra:MRA_0482"/>
<dbReference type="eggNOG" id="ENOG50335M1">
    <property type="taxonomic scope" value="Bacteria"/>
</dbReference>
<dbReference type="HOGENOM" id="CLU_089817_1_0_11"/>
<dbReference type="Proteomes" id="UP000001988">
    <property type="component" value="Chromosome"/>
</dbReference>
<dbReference type="GO" id="GO:0009986">
    <property type="term" value="C:cell surface"/>
    <property type="evidence" value="ECO:0007669"/>
    <property type="project" value="UniProtKB-SubCell"/>
</dbReference>
<dbReference type="GO" id="GO:0008201">
    <property type="term" value="F:heparin binding"/>
    <property type="evidence" value="ECO:0007669"/>
    <property type="project" value="UniProtKB-KW"/>
</dbReference>
<dbReference type="GO" id="GO:0042802">
    <property type="term" value="F:identical protein binding"/>
    <property type="evidence" value="ECO:0000353"/>
    <property type="project" value="IntAct"/>
</dbReference>
<dbReference type="GO" id="GO:0007155">
    <property type="term" value="P:cell adhesion"/>
    <property type="evidence" value="ECO:0007669"/>
    <property type="project" value="UniProtKB-KW"/>
</dbReference>
<dbReference type="Gene3D" id="1.20.5.1230">
    <property type="entry name" value="Apolipoprotein A-I"/>
    <property type="match status" value="1"/>
</dbReference>
<dbReference type="SUPFAM" id="SSF58113">
    <property type="entry name" value="Apolipoprotein A-I"/>
    <property type="match status" value="1"/>
</dbReference>
<sequence length="199" mass="21534">MAENSNIDDIKAPLLAALGAADLALATVNELITNLRERAEETRTDTRSRVEESRARLTKLQEDLPEQLTELREKFTAEELRKAAEGYLEAATSRYNELVERGEAALERLRSQQSFEEVSARAEGYVDQAVELTQEALGTVASQTRAVGERAAKLVGIELPKKAAPAKKAAPAKKAAPAKKAAAKKAPAKKAAAKKVTQK</sequence>
<feature type="initiator methionine" description="Removed" evidence="3">
    <location>
        <position position="1"/>
    </location>
</feature>
<feature type="chain" id="PRO_0000306418" description="Heparin-binding hemagglutinin">
    <location>
        <begin position="2"/>
        <end position="199"/>
    </location>
</feature>
<feature type="region of interest" description="Disordered" evidence="2">
    <location>
        <begin position="162"/>
        <end position="199"/>
    </location>
</feature>
<feature type="compositionally biased region" description="Low complexity" evidence="2">
    <location>
        <begin position="162"/>
        <end position="180"/>
    </location>
</feature>
<feature type="compositionally biased region" description="Basic residues" evidence="2">
    <location>
        <begin position="181"/>
        <end position="199"/>
    </location>
</feature>
<proteinExistence type="evidence at protein level"/>
<gene>
    <name type="primary">hbhA</name>
    <name type="ordered locus">MRA_0482</name>
</gene>
<accession>A5TZK3</accession>
<name>HBHA_MYCTA</name>
<organism>
    <name type="scientific">Mycobacterium tuberculosis (strain ATCC 25177 / H37Ra)</name>
    <dbReference type="NCBI Taxonomy" id="419947"/>
    <lineage>
        <taxon>Bacteria</taxon>
        <taxon>Bacillati</taxon>
        <taxon>Actinomycetota</taxon>
        <taxon>Actinomycetes</taxon>
        <taxon>Mycobacteriales</taxon>
        <taxon>Mycobacteriaceae</taxon>
        <taxon>Mycobacterium</taxon>
        <taxon>Mycobacterium tuberculosis complex</taxon>
    </lineage>
</organism>
<reference key="1">
    <citation type="journal article" date="2008" name="PLoS ONE">
        <title>Genetic basis of virulence attenuation revealed by comparative genomic analysis of Mycobacterium tuberculosis strain H37Ra versus H37Rv.</title>
        <authorList>
            <person name="Zheng H."/>
            <person name="Lu L."/>
            <person name="Wang B."/>
            <person name="Pu S."/>
            <person name="Zhang X."/>
            <person name="Zhu G."/>
            <person name="Shi W."/>
            <person name="Zhang L."/>
            <person name="Wang H."/>
            <person name="Wang S."/>
            <person name="Zhao G."/>
            <person name="Zhang Y."/>
        </authorList>
    </citation>
    <scope>NUCLEOTIDE SEQUENCE [LARGE SCALE GENOMIC DNA]</scope>
    <source>
        <strain>ATCC 25177 / H37Ra</strain>
    </source>
</reference>
<reference key="2">
    <citation type="journal article" date="1996" name="J. Exp. Med.">
        <title>Identification of a heparin-binding hemagglutinin present in Mycobacteria.</title>
        <authorList>
            <person name="Menozzi F.D."/>
            <person name="Rouse J.H."/>
            <person name="Alavi M."/>
            <person name="Laude-Sharp M."/>
            <person name="Muller J."/>
            <person name="Bischoff R."/>
            <person name="Brennan M.J."/>
            <person name="Locht C."/>
        </authorList>
    </citation>
    <scope>PROTEIN SEQUENCE OF 2-17</scope>
    <scope>SUBCELLULAR LOCATION</scope>
    <scope>CHARACTERIZATION</scope>
</reference>
<evidence type="ECO:0000250" key="1"/>
<evidence type="ECO:0000256" key="2">
    <source>
        <dbReference type="SAM" id="MobiDB-lite"/>
    </source>
</evidence>
<evidence type="ECO:0000269" key="3">
    <source>
    </source>
</evidence>
<evidence type="ECO:0000305" key="4"/>
<protein>
    <recommendedName>
        <fullName>Heparin-binding hemagglutinin</fullName>
    </recommendedName>
    <alternativeName>
        <fullName>Adhesin</fullName>
    </alternativeName>
</protein>